<reference key="1">
    <citation type="journal article" date="1996" name="Arch. Virol.">
        <title>Species-specific and interspecies relatedness of NSP1 sequences in human, porcine, bovine, feline, and equine rotavirus strains.</title>
        <authorList>
            <person name="Kojima K."/>
            <person name="Taniguchi K."/>
            <person name="Kobayashi N."/>
        </authorList>
    </citation>
    <scope>NUCLEOTIDE SEQUENCE [GENOMIC RNA]</scope>
</reference>
<protein>
    <recommendedName>
        <fullName evidence="1">Non-structural protein 1</fullName>
        <shortName evidence="1">NSP1</shortName>
    </recommendedName>
    <alternativeName>
        <fullName evidence="1">NCVP2</fullName>
    </alternativeName>
    <alternativeName>
        <fullName evidence="1">Non-structural RNA-binding protein 53</fullName>
        <shortName evidence="1">NS53</shortName>
    </alternativeName>
</protein>
<name>NSP1_ROTEL</name>
<proteinExistence type="inferred from homology"/>
<organism>
    <name type="scientific">Rotavirus A (isolate RVA/Equine/United Kingdom/L338/1988/G13P12[18])</name>
    <name type="common">RV-A</name>
    <dbReference type="NCBI Taxonomy" id="36441"/>
    <lineage>
        <taxon>Viruses</taxon>
        <taxon>Riboviria</taxon>
        <taxon>Orthornavirae</taxon>
        <taxon>Duplornaviricota</taxon>
        <taxon>Resentoviricetes</taxon>
        <taxon>Reovirales</taxon>
        <taxon>Sedoreoviridae</taxon>
        <taxon>Rotavirus</taxon>
        <taxon>Rotavirus A</taxon>
    </lineage>
</organism>
<comment type="function">
    <text evidence="1">Plays a role in the inhibition of host innate immunity by inducing the degradation of key host factors required to activate interferon production such as IRF3, IRF5 or IRF7. Associates with components of cullin RING ligases (CRLs) including CUL1 or CUL3, which are essential multisubunit ubiquitination complexes, to modulate their activities.</text>
</comment>
<comment type="subunit">
    <text evidence="1">Interacts (via C-terminus) with host IRF3; this interaction leads to IRF3 degradation. Interacts with host IRF7; this interaction leads to IRF7 degradation. Interacts with host CUL1 and CUL3.</text>
</comment>
<comment type="subcellular location">
    <subcellularLocation>
        <location evidence="1">Host cytoplasm</location>
        <location evidence="1">Host cytoskeleton</location>
    </subcellularLocation>
</comment>
<comment type="domain">
    <text evidence="1">The integrity of the zinc-binding domain in NSP1 is important for degradation of host IRF3.</text>
</comment>
<comment type="domain">
    <text evidence="1">The pLxIS motif targets host IRF3 for degradation; however phosphorylation of NSP1 pLxIS motif is not required for its activity.</text>
</comment>
<comment type="similarity">
    <text evidence="1">Belongs to the rotavirus NSP1 family.</text>
</comment>
<evidence type="ECO:0000255" key="1">
    <source>
        <dbReference type="HAMAP-Rule" id="MF_04088"/>
    </source>
</evidence>
<organismHost>
    <name type="scientific">Equus caballus</name>
    <name type="common">Horse</name>
    <dbReference type="NCBI Taxonomy" id="9796"/>
</organismHost>
<accession>O39822</accession>
<feature type="chain" id="PRO_0000369072" description="Non-structural protein 1">
    <location>
        <begin position="1"/>
        <end position="492"/>
    </location>
</feature>
<feature type="region of interest" description="RNA-binding" evidence="1">
    <location>
        <begin position="1"/>
        <end position="81"/>
    </location>
</feature>
<feature type="region of interest" description="Zinc-binding domain" evidence="1">
    <location>
        <begin position="42"/>
        <end position="79"/>
    </location>
</feature>
<feature type="region of interest" description="Important for cytoskeleton localization" evidence="1">
    <location>
        <begin position="82"/>
        <end position="176"/>
    </location>
</feature>
<feature type="region of interest" description="Interaction with host IRF3" evidence="1">
    <location>
        <begin position="318"/>
        <end position="492"/>
    </location>
</feature>
<feature type="short sequence motif" description="pLxIS motif" evidence="1">
    <location>
        <begin position="483"/>
        <end position="486"/>
    </location>
</feature>
<sequence length="492" mass="58174">MATFKDACFHYRKITKINRELLKIGANSIWTPVRSDKIKGWCIECCQLTELVFCSGCSLAHVCQWCVRNKRCFLDSQPHLLKLRTFEAPITKEKLQCVISMYNMLFPINENIINRFKKNVKQKKCRNEFNATWYNQLLLPITLNAAVFKFQSRIVYVFGFYEGTTACGYLPYRMVNCIDIYDRLLLDSVNFDRMSALPSDLQALYAQKYFKISRLPSMKLRQVYYSDFTKQNLITKYRTKTRITHRNVSKINWDTDIELHNDLMHNKHRILTALTTAEEKQFEVHDVNLGRIKADMFELGHHCKPNYISSNHWQPASRVSLCRWCNIKYAFRNMDWRMESMYNELMSFIQSCYKSNANVDHCSSIESVYPMVRNVFWHSTTKYIDETLEKLFNMMNPVNIDNQKVISFHWQIDLSLYLHIKMILKTEALPFMLKVHEFQSIVKGIINQWCDFSKVSELPICVESTDTLLRMYEQGELSEEYELLISDSDGDE</sequence>
<keyword id="KW-1035">Host cytoplasm</keyword>
<keyword id="KW-1037">Host cytoskeleton</keyword>
<keyword id="KW-0945">Host-virus interaction</keyword>
<keyword id="KW-1090">Inhibition of host innate immune response by virus</keyword>
<keyword id="KW-1092">Inhibition of host IRF3 by virus</keyword>
<keyword id="KW-1093">Inhibition of host IRF7 by virus</keyword>
<keyword id="KW-1113">Inhibition of host RLR pathway by virus</keyword>
<keyword id="KW-0922">Interferon antiviral system evasion</keyword>
<keyword id="KW-0479">Metal-binding</keyword>
<keyword id="KW-0694">RNA-binding</keyword>
<keyword id="KW-0899">Viral immunoevasion</keyword>
<dbReference type="EMBL" id="D38158">
    <property type="protein sequence ID" value="BAA20549.1"/>
    <property type="molecule type" value="Genomic_RNA"/>
</dbReference>
<dbReference type="GO" id="GO:0030430">
    <property type="term" value="C:host cell cytoplasm"/>
    <property type="evidence" value="ECO:0007669"/>
    <property type="project" value="UniProtKB-UniRule"/>
</dbReference>
<dbReference type="GO" id="GO:0044163">
    <property type="term" value="C:host cytoskeleton"/>
    <property type="evidence" value="ECO:0007669"/>
    <property type="project" value="UniProtKB-SubCell"/>
</dbReference>
<dbReference type="GO" id="GO:0046872">
    <property type="term" value="F:metal ion binding"/>
    <property type="evidence" value="ECO:0007669"/>
    <property type="project" value="UniProtKB-UniRule"/>
</dbReference>
<dbReference type="GO" id="GO:0003723">
    <property type="term" value="F:RNA binding"/>
    <property type="evidence" value="ECO:0007669"/>
    <property type="project" value="UniProtKB-UniRule"/>
</dbReference>
<dbReference type="GO" id="GO:0039548">
    <property type="term" value="P:symbiont-mediated suppression of host cytoplasmic pattern recognition receptor signaling pathway via inhibition of IRF3 activity"/>
    <property type="evidence" value="ECO:0007669"/>
    <property type="project" value="UniProtKB-UniRule"/>
</dbReference>
<dbReference type="GO" id="GO:0039557">
    <property type="term" value="P:symbiont-mediated suppression of host cytoplasmic pattern recognition receptor signaling pathway via inhibition of IRF7 activity"/>
    <property type="evidence" value="ECO:0007669"/>
    <property type="project" value="UniProtKB-UniRule"/>
</dbReference>
<dbReference type="HAMAP" id="MF_04088">
    <property type="entry name" value="ROTA_NSP1"/>
    <property type="match status" value="1"/>
</dbReference>
<dbReference type="InterPro" id="IPR002148">
    <property type="entry name" value="Rotavirus_NSP1"/>
</dbReference>
<dbReference type="Pfam" id="PF00981">
    <property type="entry name" value="Rota_NS53"/>
    <property type="match status" value="1"/>
</dbReference>